<gene>
    <name evidence="1" type="primary">rnhB</name>
    <name type="ordered locus">TT_C1788</name>
</gene>
<protein>
    <recommendedName>
        <fullName evidence="1">Ribonuclease HII</fullName>
        <shortName evidence="1">RNase HII</shortName>
        <ecNumber evidence="1">3.1.26.4</ecNumber>
    </recommendedName>
</protein>
<comment type="function">
    <text evidence="1">Endonuclease that specifically degrades the RNA of RNA-DNA hybrids.</text>
</comment>
<comment type="catalytic activity">
    <reaction evidence="1">
        <text>Endonucleolytic cleavage to 5'-phosphomonoester.</text>
        <dbReference type="EC" id="3.1.26.4"/>
    </reaction>
</comment>
<comment type="cofactor">
    <cofactor evidence="1">
        <name>Mn(2+)</name>
        <dbReference type="ChEBI" id="CHEBI:29035"/>
    </cofactor>
    <cofactor evidence="1">
        <name>Mg(2+)</name>
        <dbReference type="ChEBI" id="CHEBI:18420"/>
    </cofactor>
    <text evidence="1">Manganese or magnesium. Binds 1 divalent metal ion per monomer in the absence of substrate. May bind a second metal ion after substrate binding.</text>
</comment>
<comment type="subcellular location">
    <subcellularLocation>
        <location evidence="1">Cytoplasm</location>
    </subcellularLocation>
</comment>
<comment type="similarity">
    <text evidence="1">Belongs to the RNase HII family.</text>
</comment>
<dbReference type="EC" id="3.1.26.4" evidence="1"/>
<dbReference type="EMBL" id="AE017221">
    <property type="protein sequence ID" value="AAS82130.1"/>
    <property type="molecule type" value="Genomic_DNA"/>
</dbReference>
<dbReference type="RefSeq" id="WP_011174144.1">
    <property type="nucleotide sequence ID" value="NC_005835.1"/>
</dbReference>
<dbReference type="SMR" id="Q72GR0"/>
<dbReference type="KEGG" id="tth:TT_C1788"/>
<dbReference type="eggNOG" id="COG0164">
    <property type="taxonomic scope" value="Bacteria"/>
</dbReference>
<dbReference type="HOGENOM" id="CLU_036532_3_0_0"/>
<dbReference type="OrthoDB" id="9803420at2"/>
<dbReference type="Proteomes" id="UP000000592">
    <property type="component" value="Chromosome"/>
</dbReference>
<dbReference type="GO" id="GO:0005737">
    <property type="term" value="C:cytoplasm"/>
    <property type="evidence" value="ECO:0007669"/>
    <property type="project" value="UniProtKB-SubCell"/>
</dbReference>
<dbReference type="GO" id="GO:0032299">
    <property type="term" value="C:ribonuclease H2 complex"/>
    <property type="evidence" value="ECO:0007669"/>
    <property type="project" value="TreeGrafter"/>
</dbReference>
<dbReference type="GO" id="GO:0030145">
    <property type="term" value="F:manganese ion binding"/>
    <property type="evidence" value="ECO:0007669"/>
    <property type="project" value="UniProtKB-UniRule"/>
</dbReference>
<dbReference type="GO" id="GO:0003723">
    <property type="term" value="F:RNA binding"/>
    <property type="evidence" value="ECO:0007669"/>
    <property type="project" value="InterPro"/>
</dbReference>
<dbReference type="GO" id="GO:0004523">
    <property type="term" value="F:RNA-DNA hybrid ribonuclease activity"/>
    <property type="evidence" value="ECO:0007669"/>
    <property type="project" value="UniProtKB-UniRule"/>
</dbReference>
<dbReference type="GO" id="GO:0043137">
    <property type="term" value="P:DNA replication, removal of RNA primer"/>
    <property type="evidence" value="ECO:0007669"/>
    <property type="project" value="TreeGrafter"/>
</dbReference>
<dbReference type="GO" id="GO:0006298">
    <property type="term" value="P:mismatch repair"/>
    <property type="evidence" value="ECO:0007669"/>
    <property type="project" value="TreeGrafter"/>
</dbReference>
<dbReference type="CDD" id="cd07182">
    <property type="entry name" value="RNase_HII_bacteria_HII_like"/>
    <property type="match status" value="1"/>
</dbReference>
<dbReference type="Gene3D" id="3.30.420.10">
    <property type="entry name" value="Ribonuclease H-like superfamily/Ribonuclease H"/>
    <property type="match status" value="1"/>
</dbReference>
<dbReference type="HAMAP" id="MF_00052_B">
    <property type="entry name" value="RNase_HII_B"/>
    <property type="match status" value="1"/>
</dbReference>
<dbReference type="InterPro" id="IPR022898">
    <property type="entry name" value="RNase_HII"/>
</dbReference>
<dbReference type="InterPro" id="IPR001352">
    <property type="entry name" value="RNase_HII/HIII"/>
</dbReference>
<dbReference type="InterPro" id="IPR024567">
    <property type="entry name" value="RNase_HII/HIII_dom"/>
</dbReference>
<dbReference type="InterPro" id="IPR012337">
    <property type="entry name" value="RNaseH-like_sf"/>
</dbReference>
<dbReference type="InterPro" id="IPR036397">
    <property type="entry name" value="RNaseH_sf"/>
</dbReference>
<dbReference type="NCBIfam" id="NF000595">
    <property type="entry name" value="PRK00015.1-3"/>
    <property type="match status" value="1"/>
</dbReference>
<dbReference type="NCBIfam" id="NF010538">
    <property type="entry name" value="PRK13926.1"/>
    <property type="match status" value="1"/>
</dbReference>
<dbReference type="PANTHER" id="PTHR10954">
    <property type="entry name" value="RIBONUCLEASE H2 SUBUNIT A"/>
    <property type="match status" value="1"/>
</dbReference>
<dbReference type="PANTHER" id="PTHR10954:SF18">
    <property type="entry name" value="RIBONUCLEASE HII"/>
    <property type="match status" value="1"/>
</dbReference>
<dbReference type="Pfam" id="PF01351">
    <property type="entry name" value="RNase_HII"/>
    <property type="match status" value="1"/>
</dbReference>
<dbReference type="SUPFAM" id="SSF53098">
    <property type="entry name" value="Ribonuclease H-like"/>
    <property type="match status" value="1"/>
</dbReference>
<dbReference type="PROSITE" id="PS51975">
    <property type="entry name" value="RNASE_H_2"/>
    <property type="match status" value="1"/>
</dbReference>
<keyword id="KW-0963">Cytoplasm</keyword>
<keyword id="KW-0255">Endonuclease</keyword>
<keyword id="KW-0378">Hydrolase</keyword>
<keyword id="KW-0464">Manganese</keyword>
<keyword id="KW-0479">Metal-binding</keyword>
<keyword id="KW-0540">Nuclease</keyword>
<sequence>MAEGPLEAPFWRKGLLVAGLDEAGRGAWAGPIVVGVVVLPPGEYPFRDSKLLSPRARERLAEKVKEVALAFALGVAEAAEVDRLGVLKATLLAAERALLSLPLAPEALVTDYLPLPTPLPLLSPPKADEKSPTVAAASILAKVHRDRIMAELDRLYPGYGFARHKGYGTPEHQEALLALGPSPVHRKRFAPVAQAPLRFPEAP</sequence>
<proteinExistence type="inferred from homology"/>
<name>RNH2_THET2</name>
<organism>
    <name type="scientific">Thermus thermophilus (strain ATCC BAA-163 / DSM 7039 / HB27)</name>
    <dbReference type="NCBI Taxonomy" id="262724"/>
    <lineage>
        <taxon>Bacteria</taxon>
        <taxon>Thermotogati</taxon>
        <taxon>Deinococcota</taxon>
        <taxon>Deinococci</taxon>
        <taxon>Thermales</taxon>
        <taxon>Thermaceae</taxon>
        <taxon>Thermus</taxon>
    </lineage>
</organism>
<accession>Q72GR0</accession>
<reference key="1">
    <citation type="journal article" date="2004" name="Nat. Biotechnol.">
        <title>The genome sequence of the extreme thermophile Thermus thermophilus.</title>
        <authorList>
            <person name="Henne A."/>
            <person name="Brueggemann H."/>
            <person name="Raasch C."/>
            <person name="Wiezer A."/>
            <person name="Hartsch T."/>
            <person name="Liesegang H."/>
            <person name="Johann A."/>
            <person name="Lienard T."/>
            <person name="Gohl O."/>
            <person name="Martinez-Arias R."/>
            <person name="Jacobi C."/>
            <person name="Starkuviene V."/>
            <person name="Schlenczeck S."/>
            <person name="Dencker S."/>
            <person name="Huber R."/>
            <person name="Klenk H.-P."/>
            <person name="Kramer W."/>
            <person name="Merkl R."/>
            <person name="Gottschalk G."/>
            <person name="Fritz H.-J."/>
        </authorList>
    </citation>
    <scope>NUCLEOTIDE SEQUENCE [LARGE SCALE GENOMIC DNA]</scope>
    <source>
        <strain>ATCC BAA-163 / DSM 7039 / HB27</strain>
    </source>
</reference>
<feature type="chain" id="PRO_0000111644" description="Ribonuclease HII">
    <location>
        <begin position="1"/>
        <end position="203"/>
    </location>
</feature>
<feature type="domain" description="RNase H type-2" evidence="2">
    <location>
        <begin position="15"/>
        <end position="201"/>
    </location>
</feature>
<feature type="binding site" evidence="1">
    <location>
        <position position="21"/>
    </location>
    <ligand>
        <name>a divalent metal cation</name>
        <dbReference type="ChEBI" id="CHEBI:60240"/>
    </ligand>
</feature>
<feature type="binding site" evidence="1">
    <location>
        <position position="22"/>
    </location>
    <ligand>
        <name>a divalent metal cation</name>
        <dbReference type="ChEBI" id="CHEBI:60240"/>
    </ligand>
</feature>
<feature type="binding site" evidence="1">
    <location>
        <position position="111"/>
    </location>
    <ligand>
        <name>a divalent metal cation</name>
        <dbReference type="ChEBI" id="CHEBI:60240"/>
    </ligand>
</feature>
<evidence type="ECO:0000255" key="1">
    <source>
        <dbReference type="HAMAP-Rule" id="MF_00052"/>
    </source>
</evidence>
<evidence type="ECO:0000255" key="2">
    <source>
        <dbReference type="PROSITE-ProRule" id="PRU01319"/>
    </source>
</evidence>